<organism>
    <name type="scientific">Staphylococcus aureus (strain N315)</name>
    <dbReference type="NCBI Taxonomy" id="158879"/>
    <lineage>
        <taxon>Bacteria</taxon>
        <taxon>Bacillati</taxon>
        <taxon>Bacillota</taxon>
        <taxon>Bacilli</taxon>
        <taxon>Bacillales</taxon>
        <taxon>Staphylococcaceae</taxon>
        <taxon>Staphylococcus</taxon>
    </lineage>
</organism>
<proteinExistence type="evidence at protein level"/>
<sequence>MWKEKVQQYEDQIINDLKGLLAIESVRDDAKASEDAPVGPGPRKALDYMYEIAHRDGFTTHDVDHIAGRIEAGKGNDVLGILCHVDVVPAGDGWDSNPFEPVVTEDAIIARGTLDDKGPTIAAYYAIKILEDMNVDWKKRIHMIIGTDEESDWKCTDRYFKTEEMPTLGFAPDAEFPCIHGEKGITTFDLVQNKLTEDQDEPDYELITFKSGERYNMVPDHAEARVLVKENMTDVIQDFEYFLEQNHLQGDSTVDSGILVLTVEGKAVHGMDPSIGVNAGLYLLKFLASLNLDNNAQAFVAFSNRYLFNSDFGEKMGMKFHTDVMGDVTTNIGVITYDNENAGLFGINLRYPEGFEFEKAMDRFANEIQQYGFEVKLGKVQPPHYVDKNDPFVQKLVTAYRNQTNDMTEPYTIGGGTYARNLDKGVAFGAMFSDSEDLMHQKNEYITKKQLFNATSIYLEAIYSLCVEE</sequence>
<protein>
    <recommendedName>
        <fullName>Putative dipeptidase SA1572</fullName>
        <ecNumber>3.4.13.-</ecNumber>
    </recommendedName>
</protein>
<keyword id="KW-0224">Dipeptidase</keyword>
<keyword id="KW-0378">Hydrolase</keyword>
<keyword id="KW-0479">Metal-binding</keyword>
<keyword id="KW-0482">Metalloprotease</keyword>
<keyword id="KW-0645">Protease</keyword>
<keyword id="KW-0862">Zinc</keyword>
<reference key="1">
    <citation type="journal article" date="2001" name="Lancet">
        <title>Whole genome sequencing of meticillin-resistant Staphylococcus aureus.</title>
        <authorList>
            <person name="Kuroda M."/>
            <person name="Ohta T."/>
            <person name="Uchiyama I."/>
            <person name="Baba T."/>
            <person name="Yuzawa H."/>
            <person name="Kobayashi I."/>
            <person name="Cui L."/>
            <person name="Oguchi A."/>
            <person name="Aoki K."/>
            <person name="Nagai Y."/>
            <person name="Lian J.-Q."/>
            <person name="Ito T."/>
            <person name="Kanamori M."/>
            <person name="Matsumaru H."/>
            <person name="Maruyama A."/>
            <person name="Murakami H."/>
            <person name="Hosoyama A."/>
            <person name="Mizutani-Ui Y."/>
            <person name="Takahashi N.K."/>
            <person name="Sawano T."/>
            <person name="Inoue R."/>
            <person name="Kaito C."/>
            <person name="Sekimizu K."/>
            <person name="Hirakawa H."/>
            <person name="Kuhara S."/>
            <person name="Goto S."/>
            <person name="Yabuzaki J."/>
            <person name="Kanehisa M."/>
            <person name="Yamashita A."/>
            <person name="Oshima K."/>
            <person name="Furuya K."/>
            <person name="Yoshino C."/>
            <person name="Shiba T."/>
            <person name="Hattori M."/>
            <person name="Ogasawara N."/>
            <person name="Hayashi H."/>
            <person name="Hiramatsu K."/>
        </authorList>
    </citation>
    <scope>NUCLEOTIDE SEQUENCE [LARGE SCALE GENOMIC DNA]</scope>
    <source>
        <strain>N315</strain>
    </source>
</reference>
<reference key="2">
    <citation type="journal article" date="2005" name="J. Microbiol. Methods">
        <title>Correlation of proteomic and transcriptomic profiles of Staphylococcus aureus during the post-exponential phase of growth.</title>
        <authorList>
            <person name="Scherl A."/>
            <person name="Francois P."/>
            <person name="Bento M."/>
            <person name="Deshusses J.M."/>
            <person name="Charbonnier Y."/>
            <person name="Converset V."/>
            <person name="Huyghe A."/>
            <person name="Walter N."/>
            <person name="Hoogland C."/>
            <person name="Appel R.D."/>
            <person name="Sanchez J.-C."/>
            <person name="Zimmermann-Ivol C.G."/>
            <person name="Corthals G.L."/>
            <person name="Hochstrasser D.F."/>
            <person name="Schrenzel J."/>
        </authorList>
    </citation>
    <scope>IDENTIFICATION BY MASS SPECTROMETRY</scope>
    <source>
        <strain>N315</strain>
    </source>
</reference>
<reference key="3">
    <citation type="submission" date="2007-10" db="UniProtKB">
        <title>Shotgun proteomic analysis of total and membrane protein extracts of S. aureus strain N315.</title>
        <authorList>
            <person name="Vaezzadeh A.R."/>
            <person name="Deshusses J."/>
            <person name="Lescuyer P."/>
            <person name="Hochstrasser D.F."/>
        </authorList>
    </citation>
    <scope>IDENTIFICATION BY MASS SPECTROMETRY [LARGE SCALE ANALYSIS]</scope>
    <source>
        <strain>N315</strain>
    </source>
</reference>
<feature type="chain" id="PRO_0000282630" description="Putative dipeptidase SA1572">
    <location>
        <begin position="1"/>
        <end position="469"/>
    </location>
</feature>
<feature type="active site" evidence="1">
    <location>
        <position position="86"/>
    </location>
</feature>
<feature type="active site" description="Proton acceptor" evidence="1">
    <location>
        <position position="149"/>
    </location>
</feature>
<feature type="binding site" evidence="1">
    <location>
        <position position="84"/>
    </location>
    <ligand>
        <name>Zn(2+)</name>
        <dbReference type="ChEBI" id="CHEBI:29105"/>
        <label>2</label>
    </ligand>
</feature>
<feature type="binding site" evidence="1">
    <location>
        <position position="115"/>
    </location>
    <ligand>
        <name>Zn(2+)</name>
        <dbReference type="ChEBI" id="CHEBI:29105"/>
        <label>1</label>
    </ligand>
</feature>
<feature type="binding site" evidence="1">
    <location>
        <position position="115"/>
    </location>
    <ligand>
        <name>Zn(2+)</name>
        <dbReference type="ChEBI" id="CHEBI:29105"/>
        <label>2</label>
    </ligand>
</feature>
<feature type="binding site" evidence="1">
    <location>
        <position position="150"/>
    </location>
    <ligand>
        <name>Zn(2+)</name>
        <dbReference type="ChEBI" id="CHEBI:29105"/>
        <label>1</label>
    </ligand>
</feature>
<feature type="binding site" evidence="1">
    <location>
        <position position="173"/>
    </location>
    <ligand>
        <name>Zn(2+)</name>
        <dbReference type="ChEBI" id="CHEBI:29105"/>
        <label>2</label>
    </ligand>
</feature>
<feature type="binding site" evidence="1">
    <location>
        <position position="440"/>
    </location>
    <ligand>
        <name>Zn(2+)</name>
        <dbReference type="ChEBI" id="CHEBI:29105"/>
        <label>1</label>
    </ligand>
</feature>
<comment type="cofactor">
    <cofactor evidence="1">
        <name>Zn(2+)</name>
        <dbReference type="ChEBI" id="CHEBI:29105"/>
    </cofactor>
    <text evidence="1">Binds 2 Zn(2+) ions per subunit.</text>
</comment>
<comment type="similarity">
    <text evidence="2">Belongs to the peptidase M20A family.</text>
</comment>
<accession>Q7A522</accession>
<name>PEPVL_STAAN</name>
<dbReference type="EC" id="3.4.13.-"/>
<dbReference type="EMBL" id="BA000018">
    <property type="protein sequence ID" value="BAB42840.1"/>
    <property type="molecule type" value="Genomic_DNA"/>
</dbReference>
<dbReference type="PIR" id="C89960">
    <property type="entry name" value="C89960"/>
</dbReference>
<dbReference type="SMR" id="Q7A522"/>
<dbReference type="EnsemblBacteria" id="BAB42840">
    <property type="protein sequence ID" value="BAB42840"/>
    <property type="gene ID" value="BAB42840"/>
</dbReference>
<dbReference type="KEGG" id="sau:SA1572"/>
<dbReference type="HOGENOM" id="CLU_031786_2_0_9"/>
<dbReference type="GO" id="GO:0008777">
    <property type="term" value="F:acetylornithine deacetylase activity"/>
    <property type="evidence" value="ECO:0007669"/>
    <property type="project" value="TreeGrafter"/>
</dbReference>
<dbReference type="GO" id="GO:0016805">
    <property type="term" value="F:dipeptidase activity"/>
    <property type="evidence" value="ECO:0007669"/>
    <property type="project" value="UniProtKB-KW"/>
</dbReference>
<dbReference type="GO" id="GO:0008237">
    <property type="term" value="F:metallopeptidase activity"/>
    <property type="evidence" value="ECO:0007669"/>
    <property type="project" value="UniProtKB-KW"/>
</dbReference>
<dbReference type="GO" id="GO:0008270">
    <property type="term" value="F:zinc ion binding"/>
    <property type="evidence" value="ECO:0007669"/>
    <property type="project" value="InterPro"/>
</dbReference>
<dbReference type="GO" id="GO:0006526">
    <property type="term" value="P:L-arginine biosynthetic process"/>
    <property type="evidence" value="ECO:0007669"/>
    <property type="project" value="TreeGrafter"/>
</dbReference>
<dbReference type="GO" id="GO:0006508">
    <property type="term" value="P:proteolysis"/>
    <property type="evidence" value="ECO:0007669"/>
    <property type="project" value="UniProtKB-KW"/>
</dbReference>
<dbReference type="CDD" id="cd03888">
    <property type="entry name" value="M20_PepV"/>
    <property type="match status" value="1"/>
</dbReference>
<dbReference type="Gene3D" id="3.30.70.360">
    <property type="match status" value="2"/>
</dbReference>
<dbReference type="Gene3D" id="3.40.630.10">
    <property type="entry name" value="Zn peptidases"/>
    <property type="match status" value="1"/>
</dbReference>
<dbReference type="InterPro" id="IPR036264">
    <property type="entry name" value="Bact_exopeptidase_dim_dom"/>
</dbReference>
<dbReference type="InterPro" id="IPR010964">
    <property type="entry name" value="M20A_pepV-rel"/>
</dbReference>
<dbReference type="InterPro" id="IPR002933">
    <property type="entry name" value="Peptidase_M20"/>
</dbReference>
<dbReference type="InterPro" id="IPR050072">
    <property type="entry name" value="Peptidase_M20A"/>
</dbReference>
<dbReference type="NCBIfam" id="TIGR01887">
    <property type="entry name" value="dipeptidaselike"/>
    <property type="match status" value="1"/>
</dbReference>
<dbReference type="NCBIfam" id="NF005591">
    <property type="entry name" value="PRK07318.1"/>
    <property type="match status" value="1"/>
</dbReference>
<dbReference type="PANTHER" id="PTHR43808">
    <property type="entry name" value="ACETYLORNITHINE DEACETYLASE"/>
    <property type="match status" value="1"/>
</dbReference>
<dbReference type="PANTHER" id="PTHR43808:SF31">
    <property type="entry name" value="N-ACETYL-L-CITRULLINE DEACETYLASE"/>
    <property type="match status" value="1"/>
</dbReference>
<dbReference type="Pfam" id="PF01546">
    <property type="entry name" value="Peptidase_M20"/>
    <property type="match status" value="1"/>
</dbReference>
<dbReference type="SUPFAM" id="SSF55031">
    <property type="entry name" value="Bacterial exopeptidase dimerisation domain"/>
    <property type="match status" value="1"/>
</dbReference>
<dbReference type="SUPFAM" id="SSF53187">
    <property type="entry name" value="Zn-dependent exopeptidases"/>
    <property type="match status" value="1"/>
</dbReference>
<evidence type="ECO:0000250" key="1"/>
<evidence type="ECO:0000305" key="2"/>
<gene>
    <name type="ordered locus">SA1572</name>
</gene>